<dbReference type="EMBL" id="HQ288189">
    <property type="protein sequence ID" value="ADY39611.1"/>
    <property type="molecule type" value="mRNA"/>
</dbReference>
<dbReference type="SMR" id="F1CJ80"/>
<dbReference type="GO" id="GO:0005576">
    <property type="term" value="C:extracellular region"/>
    <property type="evidence" value="ECO:0007669"/>
    <property type="project" value="UniProtKB-SubCell"/>
</dbReference>
<dbReference type="GO" id="GO:0015459">
    <property type="term" value="F:potassium channel regulator activity"/>
    <property type="evidence" value="ECO:0007669"/>
    <property type="project" value="UniProtKB-KW"/>
</dbReference>
<dbReference type="GO" id="GO:0090729">
    <property type="term" value="F:toxin activity"/>
    <property type="evidence" value="ECO:0007669"/>
    <property type="project" value="UniProtKB-KW"/>
</dbReference>
<proteinExistence type="evidence at transcript level"/>
<sequence>MQKLLIILILFCILKFNVDVEGRTATMCDLPECQERCKRQNKKGKCVIEPEMNIVYHLCKCY</sequence>
<protein>
    <recommendedName>
        <fullName>U10-hottentoxin-Hj3a</fullName>
    </recommendedName>
</protein>
<accession>F1CJ80</accession>
<evidence type="ECO:0000250" key="1"/>
<evidence type="ECO:0000255" key="2"/>
<evidence type="ECO:0000305" key="3"/>
<name>KA23J_HOTJU</name>
<feature type="signal peptide" evidence="2">
    <location>
        <begin position="1"/>
        <end position="22"/>
    </location>
</feature>
<feature type="chain" id="PRO_0000417439" description="U10-hottentoxin-Hj3a">
    <location>
        <begin position="23"/>
        <end position="62"/>
    </location>
</feature>
<feature type="site" description="Basic residue of the functional dyad" evidence="1">
    <location>
        <position position="45"/>
    </location>
</feature>
<feature type="site" description="Aromatic residue of the functional dyad" evidence="1">
    <location>
        <position position="62"/>
    </location>
</feature>
<feature type="disulfide bond" evidence="2">
    <location>
        <begin position="28"/>
        <end position="46"/>
    </location>
</feature>
<feature type="disulfide bond" evidence="2">
    <location>
        <begin position="33"/>
        <end position="59"/>
    </location>
</feature>
<feature type="disulfide bond" evidence="2">
    <location>
        <begin position="37"/>
        <end position="61"/>
    </location>
</feature>
<organism>
    <name type="scientific">Hottentotta judaicus</name>
    <name type="common">Black scorpion</name>
    <name type="synonym">Buthotus judaicus</name>
    <dbReference type="NCBI Taxonomy" id="6863"/>
    <lineage>
        <taxon>Eukaryota</taxon>
        <taxon>Metazoa</taxon>
        <taxon>Ecdysozoa</taxon>
        <taxon>Arthropoda</taxon>
        <taxon>Chelicerata</taxon>
        <taxon>Arachnida</taxon>
        <taxon>Scorpiones</taxon>
        <taxon>Buthida</taxon>
        <taxon>Buthoidea</taxon>
        <taxon>Buthidae</taxon>
        <taxon>Hottentotta</taxon>
    </lineage>
</organism>
<comment type="function">
    <text evidence="1">May block potassium channels.</text>
</comment>
<comment type="subcellular location">
    <subcellularLocation>
        <location evidence="1">Secreted</location>
    </subcellularLocation>
</comment>
<comment type="tissue specificity">
    <text>Expressed by the venom gland.</text>
</comment>
<comment type="domain">
    <text evidence="3">Has the structural arrangement of an alpha-helix connected to antiparallel beta-sheets by disulfide bonds (CS-alpha/beta).</text>
</comment>
<comment type="similarity">
    <text evidence="3">Belongs to the short scorpion toxin superfamily. Potassium channel inhibitor family. Alpha-KTx 23 subfamily.</text>
</comment>
<comment type="caution">
    <text evidence="3">Has been classified as a the potassium channel toxin alpha-KTx 22.4 in PubMed:22230549. Since the subfamily 22 has already been attributed, this peptide should be reclassified as alpha-KTx 23.4.</text>
</comment>
<reference key="1">
    <citation type="journal article" date="2011" name="Toxicon">
        <title>The tale of a resting gland: transcriptome of a replete venom gland from the scorpion Hottentotta judaicus.</title>
        <authorList>
            <person name="Morgenstern D."/>
            <person name="Rohde B.H."/>
            <person name="King G.F."/>
            <person name="Tal T."/>
            <person name="Sher D."/>
            <person name="Zlotkin E."/>
        </authorList>
    </citation>
    <scope>NUCLEOTIDE SEQUENCE [MRNA]</scope>
    <source>
        <tissue>Telson</tissue>
    </source>
</reference>
<reference key="2">
    <citation type="journal article" date="2012" name="Peptides">
        <title>Identification and molecular characterization of three new K(+)-channel specific toxins from the Chinese scorpion Mesobuthus martensii Karsch revealing intronic number polymorphism and alternative splicing in duplicated genes.</title>
        <authorList>
            <person name="Zeng X.C."/>
            <person name="Zhang L."/>
            <person name="Nie Y."/>
            <person name="Luo X."/>
        </authorList>
    </citation>
    <scope>NOMENCLATURE</scope>
</reference>
<keyword id="KW-1015">Disulfide bond</keyword>
<keyword id="KW-0872">Ion channel impairing toxin</keyword>
<keyword id="KW-0528">Neurotoxin</keyword>
<keyword id="KW-0632">Potassium channel impairing toxin</keyword>
<keyword id="KW-0964">Secreted</keyword>
<keyword id="KW-0732">Signal</keyword>
<keyword id="KW-0800">Toxin</keyword>